<protein>
    <recommendedName>
        <fullName evidence="1">Virginiamycin B lyase</fullName>
        <ecNumber evidence="1">4.2.99.-</ecNumber>
    </recommendedName>
    <alternativeName>
        <fullName evidence="1">Streptogramin B lyase</fullName>
    </alternativeName>
</protein>
<dbReference type="EC" id="4.2.99.-" evidence="1"/>
<dbReference type="EMBL" id="BX640438">
    <property type="protein sequence ID" value="CAE30921.1"/>
    <property type="molecule type" value="Genomic_DNA"/>
</dbReference>
<dbReference type="RefSeq" id="WP_003807700.1">
    <property type="nucleotide sequence ID" value="NC_002927.3"/>
</dbReference>
<dbReference type="SMR" id="Q7WQB0"/>
<dbReference type="KEGG" id="bbr:BB0423"/>
<dbReference type="eggNOG" id="COG4257">
    <property type="taxonomic scope" value="Bacteria"/>
</dbReference>
<dbReference type="HOGENOM" id="CLU_054751_1_0_4"/>
<dbReference type="Proteomes" id="UP000001027">
    <property type="component" value="Chromosome"/>
</dbReference>
<dbReference type="GO" id="GO:0030288">
    <property type="term" value="C:outer membrane-bounded periplasmic space"/>
    <property type="evidence" value="ECO:0007669"/>
    <property type="project" value="TreeGrafter"/>
</dbReference>
<dbReference type="GO" id="GO:0016835">
    <property type="term" value="F:carbon-oxygen lyase activity"/>
    <property type="evidence" value="ECO:0007669"/>
    <property type="project" value="UniProtKB-UniRule"/>
</dbReference>
<dbReference type="GO" id="GO:0000287">
    <property type="term" value="F:magnesium ion binding"/>
    <property type="evidence" value="ECO:0007669"/>
    <property type="project" value="InterPro"/>
</dbReference>
<dbReference type="GO" id="GO:0017001">
    <property type="term" value="P:antibiotic catabolic process"/>
    <property type="evidence" value="ECO:0007669"/>
    <property type="project" value="UniProtKB-UniRule"/>
</dbReference>
<dbReference type="GO" id="GO:0046677">
    <property type="term" value="P:response to antibiotic"/>
    <property type="evidence" value="ECO:0007669"/>
    <property type="project" value="UniProtKB-KW"/>
</dbReference>
<dbReference type="Gene3D" id="2.130.10.10">
    <property type="entry name" value="YVTN repeat-like/Quinoprotein amine dehydrogenase"/>
    <property type="match status" value="1"/>
</dbReference>
<dbReference type="HAMAP" id="MF_01282">
    <property type="entry name" value="VirginiamycinB_lyase"/>
    <property type="match status" value="1"/>
</dbReference>
<dbReference type="InterPro" id="IPR011217">
    <property type="entry name" value="Streptogrm_lyase"/>
</dbReference>
<dbReference type="InterPro" id="IPR051344">
    <property type="entry name" value="Vgb"/>
</dbReference>
<dbReference type="InterPro" id="IPR015943">
    <property type="entry name" value="WD40/YVTN_repeat-like_dom_sf"/>
</dbReference>
<dbReference type="PANTHER" id="PTHR40274">
    <property type="entry name" value="VIRGINIAMYCIN B LYASE"/>
    <property type="match status" value="1"/>
</dbReference>
<dbReference type="PANTHER" id="PTHR40274:SF3">
    <property type="entry name" value="VIRGINIAMYCIN B LYASE"/>
    <property type="match status" value="1"/>
</dbReference>
<dbReference type="Pfam" id="PF24684">
    <property type="entry name" value="Vgb_lyase"/>
    <property type="match status" value="1"/>
</dbReference>
<dbReference type="PIRSF" id="PIRSF026412">
    <property type="entry name" value="Streptogrm_lyase"/>
    <property type="match status" value="1"/>
</dbReference>
<dbReference type="SUPFAM" id="SSF63829">
    <property type="entry name" value="Calcium-dependent phosphotriesterase"/>
    <property type="match status" value="1"/>
</dbReference>
<sequence length="299" mass="31135">MNQVEMTEFPVGKPQEALYGVASTPDGALWFTLAKGNAIGRLSPDGAVSRFPLPHADGQPTTITCGPDGRPWFTLSSANAIGRLAPDGALRMFELPRPASRPFGIAGGHDGCLWFAEMAGDRIGRITIDGDIEEYDLPVKGGYPSCMAAGRDGLMWFTLNQAGAVGSISATAAPRIFPLGAADAAPVGIASDAQGALWIAQAGNGAIARFDAGGRITEFPLHSRAARPHAIAADAAGNLWFTEWGANRIGRISEAGDLAGYELAAPGSEPHGIAIDPHGCVWAALETGRLVRLQASPRD</sequence>
<name>VGB_BORBR</name>
<reference key="1">
    <citation type="journal article" date="2003" name="Nat. Genet.">
        <title>Comparative analysis of the genome sequences of Bordetella pertussis, Bordetella parapertussis and Bordetella bronchiseptica.</title>
        <authorList>
            <person name="Parkhill J."/>
            <person name="Sebaihia M."/>
            <person name="Preston A."/>
            <person name="Murphy L.D."/>
            <person name="Thomson N.R."/>
            <person name="Harris D.E."/>
            <person name="Holden M.T.G."/>
            <person name="Churcher C.M."/>
            <person name="Bentley S.D."/>
            <person name="Mungall K.L."/>
            <person name="Cerdeno-Tarraga A.-M."/>
            <person name="Temple L."/>
            <person name="James K.D."/>
            <person name="Harris B."/>
            <person name="Quail M.A."/>
            <person name="Achtman M."/>
            <person name="Atkin R."/>
            <person name="Baker S."/>
            <person name="Basham D."/>
            <person name="Bason N."/>
            <person name="Cherevach I."/>
            <person name="Chillingworth T."/>
            <person name="Collins M."/>
            <person name="Cronin A."/>
            <person name="Davis P."/>
            <person name="Doggett J."/>
            <person name="Feltwell T."/>
            <person name="Goble A."/>
            <person name="Hamlin N."/>
            <person name="Hauser H."/>
            <person name="Holroyd S."/>
            <person name="Jagels K."/>
            <person name="Leather S."/>
            <person name="Moule S."/>
            <person name="Norberczak H."/>
            <person name="O'Neil S."/>
            <person name="Ormond D."/>
            <person name="Price C."/>
            <person name="Rabbinowitsch E."/>
            <person name="Rutter S."/>
            <person name="Sanders M."/>
            <person name="Saunders D."/>
            <person name="Seeger K."/>
            <person name="Sharp S."/>
            <person name="Simmonds M."/>
            <person name="Skelton J."/>
            <person name="Squares R."/>
            <person name="Squares S."/>
            <person name="Stevens K."/>
            <person name="Unwin L."/>
            <person name="Whitehead S."/>
            <person name="Barrell B.G."/>
            <person name="Maskell D.J."/>
        </authorList>
    </citation>
    <scope>NUCLEOTIDE SEQUENCE [LARGE SCALE GENOMIC DNA]</scope>
    <source>
        <strain>ATCC BAA-588 / NCTC 13252 / RB50</strain>
    </source>
</reference>
<keyword id="KW-0046">Antibiotic resistance</keyword>
<keyword id="KW-0456">Lyase</keyword>
<keyword id="KW-0460">Magnesium</keyword>
<keyword id="KW-0479">Metal-binding</keyword>
<evidence type="ECO:0000255" key="1">
    <source>
        <dbReference type="HAMAP-Rule" id="MF_01282"/>
    </source>
</evidence>
<gene>
    <name evidence="1" type="primary">vgb</name>
    <name type="ordered locus">BB0423</name>
</gene>
<comment type="function">
    <text evidence="1">Inactivates the type B streptogramin antibiotics by linearizing the lactone ring at the ester linkage, generating a free phenylglycine carboxylate and converting the threonyl moiety into 2-amino-butenoic acid.</text>
</comment>
<comment type="cofactor">
    <cofactor evidence="1">
        <name>Mg(2+)</name>
        <dbReference type="ChEBI" id="CHEBI:18420"/>
    </cofactor>
</comment>
<comment type="subunit">
    <text evidence="1">Monomer.</text>
</comment>
<comment type="similarity">
    <text evidence="1">Belongs to the Vgb family.</text>
</comment>
<accession>Q7WQB0</accession>
<proteinExistence type="inferred from homology"/>
<organism>
    <name type="scientific">Bordetella bronchiseptica (strain ATCC BAA-588 / NCTC 13252 / RB50)</name>
    <name type="common">Alcaligenes bronchisepticus</name>
    <dbReference type="NCBI Taxonomy" id="257310"/>
    <lineage>
        <taxon>Bacteria</taxon>
        <taxon>Pseudomonadati</taxon>
        <taxon>Pseudomonadota</taxon>
        <taxon>Betaproteobacteria</taxon>
        <taxon>Burkholderiales</taxon>
        <taxon>Alcaligenaceae</taxon>
        <taxon>Bordetella</taxon>
    </lineage>
</organism>
<feature type="chain" id="PRO_0000313768" description="Virginiamycin B lyase">
    <location>
        <begin position="1"/>
        <end position="299"/>
    </location>
</feature>
<feature type="active site" description="Proton acceptor" evidence="1">
    <location>
        <position position="271"/>
    </location>
</feature>
<feature type="binding site" evidence="1">
    <location>
        <position position="229"/>
    </location>
    <ligand>
        <name>substrate</name>
    </ligand>
</feature>
<feature type="binding site" evidence="1">
    <location>
        <position position="269"/>
    </location>
    <ligand>
        <name>Mg(2+)</name>
        <dbReference type="ChEBI" id="CHEBI:18420"/>
    </ligand>
</feature>
<feature type="binding site" evidence="1">
    <location>
        <position position="286"/>
    </location>
    <ligand>
        <name>Mg(2+)</name>
        <dbReference type="ChEBI" id="CHEBI:18420"/>
    </ligand>
</feature>